<protein>
    <recommendedName>
        <fullName>DNA topoisomerase 3-beta</fullName>
        <ecNumber evidence="4">5.6.2.1</ecNumber>
    </recommendedName>
</protein>
<keyword id="KW-0238">DNA-binding</keyword>
<keyword id="KW-0413">Isomerase</keyword>
<keyword id="KW-0460">Magnesium</keyword>
<keyword id="KW-0479">Metal-binding</keyword>
<keyword id="KW-1185">Reference proteome</keyword>
<keyword id="KW-0799">Topoisomerase</keyword>
<name>TOP3B_ORYSJ</name>
<comment type="function">
    <text evidence="1">Releases the supercoiling and torsional tension of DNA introduced during the DNA replication and transcription by transiently cleaving and rejoining one strand of the DNA duplex. Introduces a single-strand break via transesterification at a target site in duplex DNA. The scissile phosphodiester is attacked by the catalytic tyrosine of the enzyme, resulting in the formation of a DNA-(5'-phosphotyrosyl)-enzyme intermediate and the expulsion of a 3'-OH DNA strand. The free DNA strand than undergoes passage around the unbroken strand thus removing DNA supercoils. Finally, in the religation step, the DNA 3'-OH attacks the covalent intermediate to expel the active-site tyrosine and restore the DNA phosphodiester backbone (By similarity).</text>
</comment>
<comment type="catalytic activity">
    <reaction evidence="4">
        <text>ATP-independent breakage of single-stranded DNA, followed by passage and rejoining.</text>
        <dbReference type="EC" id="5.6.2.1"/>
    </reaction>
</comment>
<comment type="cofactor">
    <cofactor evidence="2">
        <name>Mg(2+)</name>
        <dbReference type="ChEBI" id="CHEBI:18420"/>
    </cofactor>
    <text evidence="2">Binds two Mg(2+) per subunit.</text>
</comment>
<comment type="similarity">
    <text evidence="3 6">Belongs to the type IA topoisomerase family.</text>
</comment>
<reference key="1">
    <citation type="journal article" date="2005" name="Nature">
        <title>The map-based sequence of the rice genome.</title>
        <authorList>
            <consortium name="International rice genome sequencing project (IRGSP)"/>
        </authorList>
    </citation>
    <scope>NUCLEOTIDE SEQUENCE [LARGE SCALE GENOMIC DNA]</scope>
    <source>
        <strain>cv. Nipponbare</strain>
    </source>
</reference>
<reference key="2">
    <citation type="journal article" date="2008" name="Nucleic Acids Res.">
        <title>The rice annotation project database (RAP-DB): 2008 update.</title>
        <authorList>
            <consortium name="The rice annotation project (RAP)"/>
        </authorList>
    </citation>
    <scope>GENOME REANNOTATION</scope>
    <source>
        <strain>cv. Nipponbare</strain>
    </source>
</reference>
<reference key="3">
    <citation type="journal article" date="2013" name="Rice">
        <title>Improvement of the Oryza sativa Nipponbare reference genome using next generation sequence and optical map data.</title>
        <authorList>
            <person name="Kawahara Y."/>
            <person name="de la Bastide M."/>
            <person name="Hamilton J.P."/>
            <person name="Kanamori H."/>
            <person name="McCombie W.R."/>
            <person name="Ouyang S."/>
            <person name="Schwartz D.C."/>
            <person name="Tanaka T."/>
            <person name="Wu J."/>
            <person name="Zhou S."/>
            <person name="Childs K.L."/>
            <person name="Davidson R.M."/>
            <person name="Lin H."/>
            <person name="Quesada-Ocampo L."/>
            <person name="Vaillancourt B."/>
            <person name="Sakai H."/>
            <person name="Lee S.S."/>
            <person name="Kim J."/>
            <person name="Numa H."/>
            <person name="Itoh T."/>
            <person name="Buell C.R."/>
            <person name="Matsumoto T."/>
        </authorList>
    </citation>
    <scope>GENOME REANNOTATION</scope>
    <source>
        <strain>cv. Nipponbare</strain>
    </source>
</reference>
<reference key="4">
    <citation type="journal article" date="2003" name="Science">
        <title>Collection, mapping, and annotation of over 28,000 cDNA clones from japonica rice.</title>
        <authorList>
            <consortium name="The rice full-length cDNA consortium"/>
        </authorList>
    </citation>
    <scope>NUCLEOTIDE SEQUENCE [LARGE SCALE MRNA]</scope>
    <source>
        <strain>cv. Nipponbare</strain>
    </source>
</reference>
<dbReference type="EC" id="5.6.2.1" evidence="4"/>
<dbReference type="EMBL" id="AP008215">
    <property type="protein sequence ID" value="BAF25492.1"/>
    <property type="molecule type" value="Genomic_DNA"/>
</dbReference>
<dbReference type="EMBL" id="AP014965">
    <property type="protein sequence ID" value="BAT08809.1"/>
    <property type="molecule type" value="Genomic_DNA"/>
</dbReference>
<dbReference type="EMBL" id="AK066999">
    <property type="protein sequence ID" value="BAG90220.1"/>
    <property type="molecule type" value="mRNA"/>
</dbReference>
<dbReference type="RefSeq" id="XP_015612275.1">
    <property type="nucleotide sequence ID" value="XM_015756789.1"/>
</dbReference>
<dbReference type="SMR" id="Q0J0S6"/>
<dbReference type="FunCoup" id="Q0J0S6">
    <property type="interactions" value="1553"/>
</dbReference>
<dbReference type="STRING" id="39947.Q0J0S6"/>
<dbReference type="PaxDb" id="39947-Q0J0S6"/>
<dbReference type="EnsemblPlants" id="Os09t0500600-01">
    <property type="protein sequence ID" value="Os09t0500600-01"/>
    <property type="gene ID" value="Os09g0500600"/>
</dbReference>
<dbReference type="Gramene" id="Os09t0500600-01">
    <property type="protein sequence ID" value="Os09t0500600-01"/>
    <property type="gene ID" value="Os09g0500600"/>
</dbReference>
<dbReference type="KEGG" id="dosa:Os09g0500600"/>
<dbReference type="eggNOG" id="KOG1957">
    <property type="taxonomic scope" value="Eukaryota"/>
</dbReference>
<dbReference type="HOGENOM" id="CLU_002929_1_0_1"/>
<dbReference type="InParanoid" id="Q0J0S6"/>
<dbReference type="OMA" id="GKWSFAN"/>
<dbReference type="OrthoDB" id="430051at2759"/>
<dbReference type="Proteomes" id="UP000000763">
    <property type="component" value="Chromosome 9"/>
</dbReference>
<dbReference type="Proteomes" id="UP000059680">
    <property type="component" value="Chromosome 9"/>
</dbReference>
<dbReference type="GO" id="GO:0005634">
    <property type="term" value="C:nucleus"/>
    <property type="evidence" value="ECO:0000318"/>
    <property type="project" value="GO_Central"/>
</dbReference>
<dbReference type="GO" id="GO:0003677">
    <property type="term" value="F:DNA binding"/>
    <property type="evidence" value="ECO:0007669"/>
    <property type="project" value="UniProtKB-KW"/>
</dbReference>
<dbReference type="GO" id="GO:0003917">
    <property type="term" value="F:DNA topoisomerase type I (single strand cut, ATP-independent) activity"/>
    <property type="evidence" value="ECO:0000318"/>
    <property type="project" value="GO_Central"/>
</dbReference>
<dbReference type="GO" id="GO:0046872">
    <property type="term" value="F:metal ion binding"/>
    <property type="evidence" value="ECO:0007669"/>
    <property type="project" value="UniProtKB-KW"/>
</dbReference>
<dbReference type="GO" id="GO:0006310">
    <property type="term" value="P:DNA recombination"/>
    <property type="evidence" value="ECO:0000318"/>
    <property type="project" value="GO_Central"/>
</dbReference>
<dbReference type="GO" id="GO:0006281">
    <property type="term" value="P:DNA repair"/>
    <property type="evidence" value="ECO:0000318"/>
    <property type="project" value="GO_Central"/>
</dbReference>
<dbReference type="GO" id="GO:0006265">
    <property type="term" value="P:DNA topological change"/>
    <property type="evidence" value="ECO:0000318"/>
    <property type="project" value="GO_Central"/>
</dbReference>
<dbReference type="CDD" id="cd00186">
    <property type="entry name" value="TOP1Ac"/>
    <property type="match status" value="1"/>
</dbReference>
<dbReference type="CDD" id="cd03362">
    <property type="entry name" value="TOPRIM_TopoIA_TopoIII"/>
    <property type="match status" value="1"/>
</dbReference>
<dbReference type="FunFam" id="1.10.290.10:FF:000001">
    <property type="entry name" value="DNA topoisomerase"/>
    <property type="match status" value="1"/>
</dbReference>
<dbReference type="FunFam" id="3.40.50.140:FF:000002">
    <property type="entry name" value="DNA topoisomerase"/>
    <property type="match status" value="1"/>
</dbReference>
<dbReference type="Gene3D" id="3.40.50.140">
    <property type="match status" value="1"/>
</dbReference>
<dbReference type="Gene3D" id="1.10.460.10">
    <property type="entry name" value="Topoisomerase I, domain 2"/>
    <property type="match status" value="1"/>
</dbReference>
<dbReference type="Gene3D" id="2.70.20.10">
    <property type="entry name" value="Topoisomerase I, domain 3"/>
    <property type="match status" value="1"/>
</dbReference>
<dbReference type="Gene3D" id="1.10.290.10">
    <property type="entry name" value="Topoisomerase I, domain 4"/>
    <property type="match status" value="1"/>
</dbReference>
<dbReference type="InterPro" id="IPR000380">
    <property type="entry name" value="Topo_IA"/>
</dbReference>
<dbReference type="InterPro" id="IPR003601">
    <property type="entry name" value="Topo_IA_2"/>
</dbReference>
<dbReference type="InterPro" id="IPR023406">
    <property type="entry name" value="Topo_IA_AS"/>
</dbReference>
<dbReference type="InterPro" id="IPR013497">
    <property type="entry name" value="Topo_IA_cen"/>
</dbReference>
<dbReference type="InterPro" id="IPR013824">
    <property type="entry name" value="Topo_IA_cen_sub1"/>
</dbReference>
<dbReference type="InterPro" id="IPR013825">
    <property type="entry name" value="Topo_IA_cen_sub2"/>
</dbReference>
<dbReference type="InterPro" id="IPR013826">
    <property type="entry name" value="Topo_IA_cen_sub3"/>
</dbReference>
<dbReference type="InterPro" id="IPR023405">
    <property type="entry name" value="Topo_IA_core_domain"/>
</dbReference>
<dbReference type="InterPro" id="IPR003602">
    <property type="entry name" value="Topo_IA_DNA-bd_dom"/>
</dbReference>
<dbReference type="InterPro" id="IPR006171">
    <property type="entry name" value="TOPRIM_dom"/>
</dbReference>
<dbReference type="InterPro" id="IPR034144">
    <property type="entry name" value="TOPRIM_TopoIII"/>
</dbReference>
<dbReference type="InterPro" id="IPR056452">
    <property type="entry name" value="Zn_ribbon_TOP3B"/>
</dbReference>
<dbReference type="PANTHER" id="PTHR11390:SF20">
    <property type="entry name" value="DNA TOPOISOMERASE 3-BETA-1"/>
    <property type="match status" value="1"/>
</dbReference>
<dbReference type="PANTHER" id="PTHR11390">
    <property type="entry name" value="PROKARYOTIC DNA TOPOISOMERASE"/>
    <property type="match status" value="1"/>
</dbReference>
<dbReference type="Pfam" id="PF01131">
    <property type="entry name" value="Topoisom_bac"/>
    <property type="match status" value="1"/>
</dbReference>
<dbReference type="Pfam" id="PF01751">
    <property type="entry name" value="Toprim"/>
    <property type="match status" value="1"/>
</dbReference>
<dbReference type="Pfam" id="PF23546">
    <property type="entry name" value="Zn_ribbon_TOP3B"/>
    <property type="match status" value="1"/>
</dbReference>
<dbReference type="PRINTS" id="PR00417">
    <property type="entry name" value="PRTPISMRASEI"/>
</dbReference>
<dbReference type="SMART" id="SM00437">
    <property type="entry name" value="TOP1Ac"/>
    <property type="match status" value="1"/>
</dbReference>
<dbReference type="SMART" id="SM00436">
    <property type="entry name" value="TOP1Bc"/>
    <property type="match status" value="1"/>
</dbReference>
<dbReference type="SMART" id="SM00493">
    <property type="entry name" value="TOPRIM"/>
    <property type="match status" value="1"/>
</dbReference>
<dbReference type="SUPFAM" id="SSF56712">
    <property type="entry name" value="Prokaryotic type I DNA topoisomerase"/>
    <property type="match status" value="1"/>
</dbReference>
<dbReference type="PROSITE" id="PS00396">
    <property type="entry name" value="TOPO_IA_1"/>
    <property type="match status" value="1"/>
</dbReference>
<dbReference type="PROSITE" id="PS52039">
    <property type="entry name" value="TOPO_IA_2"/>
    <property type="match status" value="1"/>
</dbReference>
<dbReference type="PROSITE" id="PS50880">
    <property type="entry name" value="TOPRIM"/>
    <property type="match status" value="1"/>
</dbReference>
<organism>
    <name type="scientific">Oryza sativa subsp. japonica</name>
    <name type="common">Rice</name>
    <dbReference type="NCBI Taxonomy" id="39947"/>
    <lineage>
        <taxon>Eukaryota</taxon>
        <taxon>Viridiplantae</taxon>
        <taxon>Streptophyta</taxon>
        <taxon>Embryophyta</taxon>
        <taxon>Tracheophyta</taxon>
        <taxon>Spermatophyta</taxon>
        <taxon>Magnoliopsida</taxon>
        <taxon>Liliopsida</taxon>
        <taxon>Poales</taxon>
        <taxon>Poaceae</taxon>
        <taxon>BOP clade</taxon>
        <taxon>Oryzoideae</taxon>
        <taxon>Oryzeae</taxon>
        <taxon>Oryzinae</taxon>
        <taxon>Oryza</taxon>
        <taxon>Oryza sativa</taxon>
    </lineage>
</organism>
<proteinExistence type="evidence at transcript level"/>
<gene>
    <name type="primary">TOP3B</name>
    <name type="ordered locus">Os09g0500600</name>
    <name type="ordered locus">LOC_Os09g32450</name>
</gene>
<sequence>MAPTVLMVAEKPSIALSIASALSGGRMSTRKGSTDVHEFDGMFQGSHAFFKVTSVIGHVLSVDFPPAYQNWEGTDPMDLFVAPVLRSECNPKAHIRRHLAQEARGCTYLVLWLDCDREGENICYEVIDCTGIPKSEVGRRIFRAKFSSVTEKDIMDAMNNLVLPSKDEALAVDARQEIDLKVGVAFTRFQTRYFQGKYGNLDSRVISYGPCQTPTLGFCVQRYQQITTFKPEKFWSLKTYVIKDGNEIQLEWDRKKLFDFDVTVMFQKMVASDGILKVTDISVKEECKARPPGLNTVNLLKVASSALGIGPQTAMHLAERLYTQGFISYPRTESTAYPSSFDFRSALAALAHNPLWSNDVRTLLDTGFVKPKQGHDAGDHPPITPMRLATEEALGTDAWRLYQYICQHFIGTVSPDCRYTRTSIEFTSGGETFHCVGNRVTSKGFTSIMPWLAVSENNIPAYKKGDAVSIHKVDIYEGSTTPPDYLSESELISLMEKNGIGTDASIPVHVNNICERNYVQVNSGRRLVPTPLGTTLIRGYQCIDADLCLPDIRRFIEQQITLIAKGEADHLQVVQHVLQQFMKKYSYFVKKIENMDALFEAQFSPLADSGRLLSKCGKCARYMKYISTQPMRLYCVTCEEVYYLPQNGSIKLYKEIICPLDGFELLLFSMVGPDAKSFPLCPFCYNSPPFEGIDKLFGALKLDDTGKVGKGAGMPCFLCLHPTCKQSMITQGVCACPECTGTLILDPVSAPKWRLYCNRCNCIVLLPHAAHKISTTDKKCPTCESTIIEVDFNKKTTPLKDGATLHEGCILCDELLHSLIEMKHGKSFFMRRGRGRGRGRGRGRGSSRGRRGSSRHDDPKMSFRDF</sequence>
<evidence type="ECO:0000250" key="1"/>
<evidence type="ECO:0000255" key="2">
    <source>
        <dbReference type="PROSITE-ProRule" id="PRU00995"/>
    </source>
</evidence>
<evidence type="ECO:0000255" key="3">
    <source>
        <dbReference type="PROSITE-ProRule" id="PRU01383"/>
    </source>
</evidence>
<evidence type="ECO:0000255" key="4">
    <source>
        <dbReference type="PROSITE-ProRule" id="PRU10131"/>
    </source>
</evidence>
<evidence type="ECO:0000256" key="5">
    <source>
        <dbReference type="SAM" id="MobiDB-lite"/>
    </source>
</evidence>
<evidence type="ECO:0000305" key="6"/>
<accession>Q0J0S6</accession>
<accession>A0A0P0XQ49</accession>
<feature type="chain" id="PRO_0000429774" description="DNA topoisomerase 3-beta">
    <location>
        <begin position="1"/>
        <end position="866"/>
    </location>
</feature>
<feature type="domain" description="Toprim" evidence="2">
    <location>
        <begin position="4"/>
        <end position="149"/>
    </location>
</feature>
<feature type="domain" description="Topo IA-type catalytic" evidence="3">
    <location>
        <begin position="165"/>
        <end position="585"/>
    </location>
</feature>
<feature type="region of interest" description="Interaction with DNA" evidence="1">
    <location>
        <begin position="207"/>
        <end position="212"/>
    </location>
</feature>
<feature type="region of interest" description="Disordered" evidence="5">
    <location>
        <begin position="830"/>
        <end position="866"/>
    </location>
</feature>
<feature type="compositionally biased region" description="Basic residues" evidence="5">
    <location>
        <begin position="830"/>
        <end position="853"/>
    </location>
</feature>
<feature type="compositionally biased region" description="Basic and acidic residues" evidence="5">
    <location>
        <begin position="854"/>
        <end position="866"/>
    </location>
</feature>
<feature type="active site" description="O-(5'-phospho-DNA)-tyrosine intermediate" evidence="3">
    <location>
        <position position="329"/>
    </location>
</feature>
<feature type="binding site" evidence="2">
    <location>
        <position position="10"/>
    </location>
    <ligand>
        <name>Mg(2+)</name>
        <dbReference type="ChEBI" id="CHEBI:18420"/>
        <label>1</label>
        <note>catalytic</note>
    </ligand>
</feature>
<feature type="binding site" evidence="2">
    <location>
        <position position="114"/>
    </location>
    <ligand>
        <name>Mg(2+)</name>
        <dbReference type="ChEBI" id="CHEBI:18420"/>
        <label>1</label>
        <note>catalytic</note>
    </ligand>
</feature>
<feature type="binding site" evidence="2">
    <location>
        <position position="114"/>
    </location>
    <ligand>
        <name>Mg(2+)</name>
        <dbReference type="ChEBI" id="CHEBI:18420"/>
        <label>2</label>
    </ligand>
</feature>
<feature type="binding site" evidence="2">
    <location>
        <position position="116"/>
    </location>
    <ligand>
        <name>Mg(2+)</name>
        <dbReference type="ChEBI" id="CHEBI:18420"/>
        <label>2</label>
    </ligand>
</feature>
<feature type="site" description="Interaction with DNA" evidence="2">
    <location>
        <position position="71"/>
    </location>
</feature>
<feature type="site" description="Interaction with DNA" evidence="2">
    <location>
        <position position="188"/>
    </location>
</feature>
<feature type="site" description="Interaction with DNA" evidence="2">
    <location>
        <position position="195"/>
    </location>
</feature>
<feature type="site" description="Interaction with DNA" evidence="2">
    <location>
        <position position="331"/>
    </location>
</feature>